<accession>P00298</accession>
<gene>
    <name type="primary">PETE</name>
</gene>
<dbReference type="PIR" id="A90349">
    <property type="entry name" value="CURXCO"/>
</dbReference>
<dbReference type="SMR" id="P00298"/>
<dbReference type="GO" id="GO:0009543">
    <property type="term" value="C:chloroplast thylakoid lumen"/>
    <property type="evidence" value="ECO:0007669"/>
    <property type="project" value="TreeGrafter"/>
</dbReference>
<dbReference type="GO" id="GO:0009535">
    <property type="term" value="C:chloroplast thylakoid membrane"/>
    <property type="evidence" value="ECO:0007669"/>
    <property type="project" value="UniProtKB-SubCell"/>
</dbReference>
<dbReference type="GO" id="GO:0005507">
    <property type="term" value="F:copper ion binding"/>
    <property type="evidence" value="ECO:0007669"/>
    <property type="project" value="InterPro"/>
</dbReference>
<dbReference type="GO" id="GO:0046028">
    <property type="term" value="F:electron transporter, transferring electrons from cytochrome b6/f complex of photosystem II activity"/>
    <property type="evidence" value="ECO:0007669"/>
    <property type="project" value="TreeGrafter"/>
</dbReference>
<dbReference type="CDD" id="cd04219">
    <property type="entry name" value="Plastocyanin"/>
    <property type="match status" value="1"/>
</dbReference>
<dbReference type="Gene3D" id="2.60.40.420">
    <property type="entry name" value="Cupredoxins - blue copper proteins"/>
    <property type="match status" value="1"/>
</dbReference>
<dbReference type="InterPro" id="IPR000923">
    <property type="entry name" value="BlueCu_1"/>
</dbReference>
<dbReference type="InterPro" id="IPR028871">
    <property type="entry name" value="BlueCu_1_BS"/>
</dbReference>
<dbReference type="InterPro" id="IPR001235">
    <property type="entry name" value="Copper_blue_Plastocyanin"/>
</dbReference>
<dbReference type="InterPro" id="IPR008972">
    <property type="entry name" value="Cupredoxin"/>
</dbReference>
<dbReference type="InterPro" id="IPR002387">
    <property type="entry name" value="Plastocyanin"/>
</dbReference>
<dbReference type="NCBIfam" id="TIGR02656">
    <property type="entry name" value="cyanin_plasto"/>
    <property type="match status" value="1"/>
</dbReference>
<dbReference type="PANTHER" id="PTHR34192">
    <property type="entry name" value="PLASTOCYANIN MAJOR ISOFORM, CHLOROPLASTIC-RELATED"/>
    <property type="match status" value="1"/>
</dbReference>
<dbReference type="PANTHER" id="PTHR34192:SF10">
    <property type="entry name" value="PLASTOCYANIN MAJOR ISOFORM, CHLOROPLASTIC-RELATED"/>
    <property type="match status" value="1"/>
</dbReference>
<dbReference type="Pfam" id="PF00127">
    <property type="entry name" value="Copper-bind"/>
    <property type="match status" value="1"/>
</dbReference>
<dbReference type="PRINTS" id="PR00156">
    <property type="entry name" value="COPPERBLUE"/>
</dbReference>
<dbReference type="PRINTS" id="PR00157">
    <property type="entry name" value="PLASTOCYANIN"/>
</dbReference>
<dbReference type="SUPFAM" id="SSF49503">
    <property type="entry name" value="Cupredoxins"/>
    <property type="match status" value="1"/>
</dbReference>
<dbReference type="PROSITE" id="PS00196">
    <property type="entry name" value="COPPER_BLUE"/>
    <property type="match status" value="1"/>
</dbReference>
<evidence type="ECO:0000250" key="1">
    <source>
        <dbReference type="UniProtKB" id="P18068"/>
    </source>
</evidence>
<evidence type="ECO:0000269" key="2">
    <source ref="1"/>
</evidence>
<evidence type="ECO:0000305" key="3"/>
<proteinExistence type="evidence at protein level"/>
<protein>
    <recommendedName>
        <fullName>Plastocyanin</fullName>
    </recommendedName>
</protein>
<reference key="1">
    <citation type="journal article" date="1974" name="Biochem. Soc. Trans.">
        <title>Studies of the amino acid sequence of plastocyanin from Rumex obtusifolius (broad-leaved dock).</title>
        <authorList>
            <person name="Haslett B."/>
            <person name="Bailey C.J."/>
            <person name="Ramshaw J.A.M."/>
            <person name="Scawen M.D."/>
            <person name="Boulter D."/>
        </authorList>
    </citation>
    <scope>PROTEIN SEQUENCE</scope>
    <scope>SUBCELLULAR LOCATION</scope>
</reference>
<reference key="2">
    <citation type="journal article" date="1979" name="J. Proc. Royal Soc. N.S. Wales">
        <title>Elegance in molecular design: the copper site of photosynthetic electron-transfer protein.</title>
        <authorList>
            <person name="Freeman H.C."/>
        </authorList>
    </citation>
    <scope>SEQUENCE REVISION TO 92</scope>
</reference>
<keyword id="KW-0150">Chloroplast</keyword>
<keyword id="KW-0186">Copper</keyword>
<keyword id="KW-0903">Direct protein sequencing</keyword>
<keyword id="KW-0249">Electron transport</keyword>
<keyword id="KW-0472">Membrane</keyword>
<keyword id="KW-0479">Metal-binding</keyword>
<keyword id="KW-0934">Plastid</keyword>
<keyword id="KW-0793">Thylakoid</keyword>
<keyword id="KW-0813">Transport</keyword>
<feature type="chain" id="PRO_0000085572" description="Plastocyanin">
    <location>
        <begin position="1"/>
        <end position="99"/>
    </location>
</feature>
<feature type="domain" description="Plastocyanin-like">
    <location>
        <begin position="1"/>
        <end position="99"/>
    </location>
</feature>
<feature type="binding site" evidence="1">
    <location>
        <position position="37"/>
    </location>
    <ligand>
        <name>Cu cation</name>
        <dbReference type="ChEBI" id="CHEBI:23378"/>
    </ligand>
</feature>
<feature type="binding site" evidence="1">
    <location>
        <position position="84"/>
    </location>
    <ligand>
        <name>Cu cation</name>
        <dbReference type="ChEBI" id="CHEBI:23378"/>
    </ligand>
</feature>
<feature type="binding site" evidence="1">
    <location>
        <position position="87"/>
    </location>
    <ligand>
        <name>Cu cation</name>
        <dbReference type="ChEBI" id="CHEBI:23378"/>
    </ligand>
</feature>
<feature type="binding site" evidence="1">
    <location>
        <position position="92"/>
    </location>
    <ligand>
        <name>Cu cation</name>
        <dbReference type="ChEBI" id="CHEBI:23378"/>
    </ligand>
</feature>
<sequence length="99" mass="10355">IEIKLGGDDGALAFVPGSFTVAAGEKIVFKNNAGFPHNIVFDEDEVPAGVDASKISMSEEDLLNAPGETYAVTLSEKGTYSFYCSPHQGAGMVGKVTVQ</sequence>
<organism>
    <name type="scientific">Rumex obtusifolius</name>
    <name type="common">Bitter dock</name>
    <dbReference type="NCBI Taxonomy" id="3619"/>
    <lineage>
        <taxon>Eukaryota</taxon>
        <taxon>Viridiplantae</taxon>
        <taxon>Streptophyta</taxon>
        <taxon>Embryophyta</taxon>
        <taxon>Tracheophyta</taxon>
        <taxon>Spermatophyta</taxon>
        <taxon>Magnoliopsida</taxon>
        <taxon>eudicotyledons</taxon>
        <taxon>Gunneridae</taxon>
        <taxon>Pentapetalae</taxon>
        <taxon>Caryophyllales</taxon>
        <taxon>Polygonaceae</taxon>
        <taxon>Polygonoideae</taxon>
        <taxon>Rumiceae</taxon>
        <taxon>Rumex</taxon>
        <taxon>Rumex subgen. Acetosa</taxon>
    </lineage>
</organism>
<name>PLAS_RUMOB</name>
<comment type="function">
    <text evidence="1">Participates in electron transfer between P700 and the cytochrome b6-f complex in photosystem I.</text>
</comment>
<comment type="cofactor">
    <cofactor evidence="1">
        <name>Cu(2+)</name>
        <dbReference type="ChEBI" id="CHEBI:29036"/>
    </cofactor>
</comment>
<comment type="subcellular location">
    <subcellularLocation>
        <location evidence="2">Plastid</location>
        <location evidence="2">Chloroplast thylakoid membrane</location>
        <topology evidence="1">Peripheral membrane protein</topology>
        <orientation evidence="1">Lumenal side</orientation>
    </subcellularLocation>
    <text>Loosely bound to the inner thylakoid membrane surface in chloroplasts (By similarity).</text>
</comment>
<comment type="similarity">
    <text evidence="3">Belongs to the plastocyanin family.</text>
</comment>